<feature type="chain" id="PRO_0000206775" description="Synaptobrevin homolog YKT6">
    <location>
        <begin position="1"/>
        <end position="202"/>
    </location>
</feature>
<feature type="propeptide" id="PRO_0000396670" description="Removed in mature form" evidence="1">
    <location>
        <begin position="203"/>
        <end position="205"/>
    </location>
</feature>
<feature type="domain" description="Longin" evidence="2">
    <location>
        <begin position="7"/>
        <end position="131"/>
    </location>
</feature>
<feature type="domain" description="v-SNARE coiled-coil homology" evidence="3">
    <location>
        <begin position="145"/>
        <end position="205"/>
    </location>
</feature>
<feature type="modified residue" description="Cysteine methyl ester" evidence="1">
    <location>
        <position position="202"/>
    </location>
</feature>
<feature type="lipid moiety-binding region" description="S-palmitoyl cysteine" evidence="1">
    <location>
        <position position="201"/>
    </location>
</feature>
<feature type="lipid moiety-binding region" description="S-farnesyl cysteine" evidence="1">
    <location>
        <position position="202"/>
    </location>
</feature>
<name>YKT6_CANGA</name>
<gene>
    <name type="primary">YKT6</name>
    <name type="ordered locus">CAGL0D03498g</name>
</gene>
<dbReference type="EMBL" id="CR380950">
    <property type="protein sequence ID" value="CAG58478.1"/>
    <property type="molecule type" value="Genomic_DNA"/>
</dbReference>
<dbReference type="RefSeq" id="XP_445567.1">
    <property type="nucleotide sequence ID" value="XM_445567.1"/>
</dbReference>
<dbReference type="SMR" id="Q6FW27"/>
<dbReference type="FunCoup" id="Q6FW27">
    <property type="interactions" value="1351"/>
</dbReference>
<dbReference type="STRING" id="284593.Q6FW27"/>
<dbReference type="EnsemblFungi" id="CAGL0D03498g-T">
    <property type="protein sequence ID" value="CAGL0D03498g-T-p1"/>
    <property type="gene ID" value="CAGL0D03498g"/>
</dbReference>
<dbReference type="KEGG" id="cgr:2887263"/>
<dbReference type="CGD" id="CAL0128317">
    <property type="gene designation" value="CAGL0D03498g"/>
</dbReference>
<dbReference type="VEuPathDB" id="FungiDB:B1J91_D03498g"/>
<dbReference type="VEuPathDB" id="FungiDB:CAGL0D03498g"/>
<dbReference type="eggNOG" id="KOG0861">
    <property type="taxonomic scope" value="Eukaryota"/>
</dbReference>
<dbReference type="HOGENOM" id="CLU_074848_0_1_1"/>
<dbReference type="InParanoid" id="Q6FW27"/>
<dbReference type="OMA" id="HYIGIIR"/>
<dbReference type="Proteomes" id="UP000002428">
    <property type="component" value="Chromosome D"/>
</dbReference>
<dbReference type="GO" id="GO:0000421">
    <property type="term" value="C:autophagosome membrane"/>
    <property type="evidence" value="ECO:0007669"/>
    <property type="project" value="EnsemblFungi"/>
</dbReference>
<dbReference type="GO" id="GO:0005768">
    <property type="term" value="C:endosome"/>
    <property type="evidence" value="ECO:0007669"/>
    <property type="project" value="EnsemblFungi"/>
</dbReference>
<dbReference type="GO" id="GO:0005576">
    <property type="term" value="C:extracellular region"/>
    <property type="evidence" value="ECO:0000314"/>
    <property type="project" value="CGD"/>
</dbReference>
<dbReference type="GO" id="GO:0000324">
    <property type="term" value="C:fungal-type vacuole"/>
    <property type="evidence" value="ECO:0007669"/>
    <property type="project" value="EnsemblFungi"/>
</dbReference>
<dbReference type="GO" id="GO:0005794">
    <property type="term" value="C:Golgi apparatus"/>
    <property type="evidence" value="ECO:0007669"/>
    <property type="project" value="EnsemblFungi"/>
</dbReference>
<dbReference type="GO" id="GO:0005886">
    <property type="term" value="C:plasma membrane"/>
    <property type="evidence" value="ECO:0007669"/>
    <property type="project" value="UniProtKB-SubCell"/>
</dbReference>
<dbReference type="GO" id="GO:0031201">
    <property type="term" value="C:SNARE complex"/>
    <property type="evidence" value="ECO:0007669"/>
    <property type="project" value="EnsemblFungi"/>
</dbReference>
<dbReference type="GO" id="GO:0016409">
    <property type="term" value="F:palmitoyltransferase activity"/>
    <property type="evidence" value="ECO:0007669"/>
    <property type="project" value="EnsemblFungi"/>
</dbReference>
<dbReference type="GO" id="GO:0005484">
    <property type="term" value="F:SNAP receptor activity"/>
    <property type="evidence" value="ECO:0007669"/>
    <property type="project" value="EnsemblFungi"/>
</dbReference>
<dbReference type="GO" id="GO:0061909">
    <property type="term" value="P:autophagosome-lysosome fusion"/>
    <property type="evidence" value="ECO:0007669"/>
    <property type="project" value="EnsemblFungi"/>
</dbReference>
<dbReference type="GO" id="GO:0006888">
    <property type="term" value="P:endoplasmic reticulum to Golgi vesicle-mediated transport"/>
    <property type="evidence" value="ECO:0007669"/>
    <property type="project" value="EnsemblFungi"/>
</dbReference>
<dbReference type="GO" id="GO:0006891">
    <property type="term" value="P:intra-Golgi vesicle-mediated transport"/>
    <property type="evidence" value="ECO:0007669"/>
    <property type="project" value="EnsemblFungi"/>
</dbReference>
<dbReference type="GO" id="GO:0006886">
    <property type="term" value="P:intracellular protein transport"/>
    <property type="evidence" value="ECO:0007669"/>
    <property type="project" value="EnsemblFungi"/>
</dbReference>
<dbReference type="GO" id="GO:0042144">
    <property type="term" value="P:vacuole fusion, non-autophagic"/>
    <property type="evidence" value="ECO:0007669"/>
    <property type="project" value="EnsemblFungi"/>
</dbReference>
<dbReference type="CDD" id="cd14824">
    <property type="entry name" value="Longin"/>
    <property type="match status" value="1"/>
</dbReference>
<dbReference type="CDD" id="cd15867">
    <property type="entry name" value="R-SNARE_YKT6"/>
    <property type="match status" value="1"/>
</dbReference>
<dbReference type="FunFam" id="3.30.450.50:FF:000020">
    <property type="entry name" value="Synaptobrevin homolog YKT6"/>
    <property type="match status" value="1"/>
</dbReference>
<dbReference type="FunFam" id="1.20.5.110:FF:000020">
    <property type="entry name" value="synaptobrevin homolog YKT6"/>
    <property type="match status" value="1"/>
</dbReference>
<dbReference type="Gene3D" id="1.20.5.110">
    <property type="match status" value="1"/>
</dbReference>
<dbReference type="Gene3D" id="3.30.450.50">
    <property type="entry name" value="Longin domain"/>
    <property type="match status" value="1"/>
</dbReference>
<dbReference type="InterPro" id="IPR011012">
    <property type="entry name" value="Longin-like_dom_sf"/>
</dbReference>
<dbReference type="InterPro" id="IPR010908">
    <property type="entry name" value="Longin_dom"/>
</dbReference>
<dbReference type="InterPro" id="IPR045848">
    <property type="entry name" value="R-SNARE_YKT6"/>
</dbReference>
<dbReference type="InterPro" id="IPR001388">
    <property type="entry name" value="Synaptobrevin-like"/>
</dbReference>
<dbReference type="InterPro" id="IPR042855">
    <property type="entry name" value="V_SNARE_CC"/>
</dbReference>
<dbReference type="PANTHER" id="PTHR45806">
    <property type="entry name" value="SYNAPTOBREVIN HOMOLOG YKT6"/>
    <property type="match status" value="1"/>
</dbReference>
<dbReference type="PANTHER" id="PTHR45806:SF1">
    <property type="entry name" value="SYNAPTOBREVIN HOMOLOG YKT6"/>
    <property type="match status" value="1"/>
</dbReference>
<dbReference type="Pfam" id="PF13774">
    <property type="entry name" value="Longin"/>
    <property type="match status" value="1"/>
</dbReference>
<dbReference type="Pfam" id="PF00957">
    <property type="entry name" value="Synaptobrevin"/>
    <property type="match status" value="1"/>
</dbReference>
<dbReference type="PRINTS" id="PR00219">
    <property type="entry name" value="SYNAPTOBREVN"/>
</dbReference>
<dbReference type="SMART" id="SM01270">
    <property type="entry name" value="Longin"/>
    <property type="match status" value="1"/>
</dbReference>
<dbReference type="SUPFAM" id="SSF58038">
    <property type="entry name" value="SNARE fusion complex"/>
    <property type="match status" value="1"/>
</dbReference>
<dbReference type="SUPFAM" id="SSF64356">
    <property type="entry name" value="SNARE-like"/>
    <property type="match status" value="1"/>
</dbReference>
<dbReference type="PROSITE" id="PS50859">
    <property type="entry name" value="LONGIN"/>
    <property type="match status" value="1"/>
</dbReference>
<dbReference type="PROSITE" id="PS00417">
    <property type="entry name" value="SYNAPTOBREVIN"/>
    <property type="match status" value="1"/>
</dbReference>
<dbReference type="PROSITE" id="PS50892">
    <property type="entry name" value="V_SNARE"/>
    <property type="match status" value="1"/>
</dbReference>
<keyword id="KW-1003">Cell membrane</keyword>
<keyword id="KW-0175">Coiled coil</keyword>
<keyword id="KW-0449">Lipoprotein</keyword>
<keyword id="KW-0472">Membrane</keyword>
<keyword id="KW-0488">Methylation</keyword>
<keyword id="KW-0564">Palmitate</keyword>
<keyword id="KW-0636">Prenylation</keyword>
<keyword id="KW-1185">Reference proteome</keyword>
<organism>
    <name type="scientific">Candida glabrata (strain ATCC 2001 / BCRC 20586 / JCM 3761 / NBRC 0622 / NRRL Y-65 / CBS 138)</name>
    <name type="common">Yeast</name>
    <name type="synonym">Nakaseomyces glabratus</name>
    <dbReference type="NCBI Taxonomy" id="284593"/>
    <lineage>
        <taxon>Eukaryota</taxon>
        <taxon>Fungi</taxon>
        <taxon>Dikarya</taxon>
        <taxon>Ascomycota</taxon>
        <taxon>Saccharomycotina</taxon>
        <taxon>Saccharomycetes</taxon>
        <taxon>Saccharomycetales</taxon>
        <taxon>Saccharomycetaceae</taxon>
        <taxon>Nakaseomyces</taxon>
    </lineage>
</organism>
<proteinExistence type="inferred from homology"/>
<accession>Q6FW27</accession>
<evidence type="ECO:0000250" key="1"/>
<evidence type="ECO:0000255" key="2">
    <source>
        <dbReference type="PROSITE-ProRule" id="PRU00231"/>
    </source>
</evidence>
<evidence type="ECO:0000255" key="3">
    <source>
        <dbReference type="PROSITE-ProRule" id="PRU00290"/>
    </source>
</evidence>
<evidence type="ECO:0000305" key="4"/>
<sequence>MKIYYIGVFRSPAEQSSDEKALELTEVKDLSQFGFFERNSVGQFMTFFAETVATRTTAGQRQSVEEGNYIGHVYARSEGICGVLITDKDYPVRPAYTLLNKVLDEYLVAHPADQWKSITATNDSLKMAELSTYISKYQDPAQADAIMKVQQELDETKIVLHKTIENVLQRGEKLDNLVDKSESLTASSKMFYKQAKKTNSCCIIM</sequence>
<protein>
    <recommendedName>
        <fullName>Synaptobrevin homolog YKT6</fullName>
    </recommendedName>
</protein>
<comment type="subcellular location">
    <subcellularLocation>
        <location evidence="4">Cell membrane</location>
        <topology evidence="4">Lipid-anchor</topology>
        <orientation evidence="4">Cytoplasmic side</orientation>
    </subcellularLocation>
</comment>
<comment type="similarity">
    <text evidence="4">Belongs to the synaptobrevin family.</text>
</comment>
<reference key="1">
    <citation type="journal article" date="2004" name="Nature">
        <title>Genome evolution in yeasts.</title>
        <authorList>
            <person name="Dujon B."/>
            <person name="Sherman D."/>
            <person name="Fischer G."/>
            <person name="Durrens P."/>
            <person name="Casaregola S."/>
            <person name="Lafontaine I."/>
            <person name="de Montigny J."/>
            <person name="Marck C."/>
            <person name="Neuveglise C."/>
            <person name="Talla E."/>
            <person name="Goffard N."/>
            <person name="Frangeul L."/>
            <person name="Aigle M."/>
            <person name="Anthouard V."/>
            <person name="Babour A."/>
            <person name="Barbe V."/>
            <person name="Barnay S."/>
            <person name="Blanchin S."/>
            <person name="Beckerich J.-M."/>
            <person name="Beyne E."/>
            <person name="Bleykasten C."/>
            <person name="Boisrame A."/>
            <person name="Boyer J."/>
            <person name="Cattolico L."/>
            <person name="Confanioleri F."/>
            <person name="de Daruvar A."/>
            <person name="Despons L."/>
            <person name="Fabre E."/>
            <person name="Fairhead C."/>
            <person name="Ferry-Dumazet H."/>
            <person name="Groppi A."/>
            <person name="Hantraye F."/>
            <person name="Hennequin C."/>
            <person name="Jauniaux N."/>
            <person name="Joyet P."/>
            <person name="Kachouri R."/>
            <person name="Kerrest A."/>
            <person name="Koszul R."/>
            <person name="Lemaire M."/>
            <person name="Lesur I."/>
            <person name="Ma L."/>
            <person name="Muller H."/>
            <person name="Nicaud J.-M."/>
            <person name="Nikolski M."/>
            <person name="Oztas S."/>
            <person name="Ozier-Kalogeropoulos O."/>
            <person name="Pellenz S."/>
            <person name="Potier S."/>
            <person name="Richard G.-F."/>
            <person name="Straub M.-L."/>
            <person name="Suleau A."/>
            <person name="Swennen D."/>
            <person name="Tekaia F."/>
            <person name="Wesolowski-Louvel M."/>
            <person name="Westhof E."/>
            <person name="Wirth B."/>
            <person name="Zeniou-Meyer M."/>
            <person name="Zivanovic Y."/>
            <person name="Bolotin-Fukuhara M."/>
            <person name="Thierry A."/>
            <person name="Bouchier C."/>
            <person name="Caudron B."/>
            <person name="Scarpelli C."/>
            <person name="Gaillardin C."/>
            <person name="Weissenbach J."/>
            <person name="Wincker P."/>
            <person name="Souciet J.-L."/>
        </authorList>
    </citation>
    <scope>NUCLEOTIDE SEQUENCE [LARGE SCALE GENOMIC DNA]</scope>
    <source>
        <strain>ATCC 2001 / BCRC 20586 / JCM 3761 / NBRC 0622 / NRRL Y-65 / CBS 138</strain>
    </source>
</reference>